<feature type="chain" id="PRO_0000402337" description="Elongation factor Ts, mitochondrial">
    <location>
        <begin position="1"/>
        <end position="276"/>
    </location>
</feature>
<gene>
    <name type="ORF">LinJ29.0880</name>
    <name type="ORF">LinJ_29_0750</name>
</gene>
<comment type="function">
    <text evidence="1">Associates with the EF-Tu.GDP complex and induces the exchange of GDP to GTP. It remains bound to the aminoacyl-tRNA.EF-Tu.GTP complex up to the GTP hydrolysis stage on the ribosome.</text>
</comment>
<comment type="subcellular location">
    <subcellularLocation>
        <location evidence="1">Mitochondrion</location>
    </subcellularLocation>
</comment>
<comment type="miscellaneous">
    <text evidence="1">This protein may be expected to contain an N-terminal transit peptide but none has been predicted.</text>
</comment>
<comment type="similarity">
    <text evidence="1">Belongs to the EF-Ts family.</text>
</comment>
<dbReference type="EMBL" id="FR796461">
    <property type="protein sequence ID" value="CAM69633.1"/>
    <property type="molecule type" value="Genomic_DNA"/>
</dbReference>
<dbReference type="RefSeq" id="XP_001466594.1">
    <property type="nucleotide sequence ID" value="XM_001466557.1"/>
</dbReference>
<dbReference type="SMR" id="A4I4C5"/>
<dbReference type="STRING" id="5671.A4I4C5"/>
<dbReference type="GeneID" id="5070626"/>
<dbReference type="KEGG" id="lif:LINJ_29_0750"/>
<dbReference type="VEuPathDB" id="TriTrypDB:LINF_290012200"/>
<dbReference type="eggNOG" id="KOG1071">
    <property type="taxonomic scope" value="Eukaryota"/>
</dbReference>
<dbReference type="InParanoid" id="A4I4C5"/>
<dbReference type="OMA" id="APHMSER"/>
<dbReference type="Proteomes" id="UP000008153">
    <property type="component" value="Chromosome 29"/>
</dbReference>
<dbReference type="GO" id="GO:0005739">
    <property type="term" value="C:mitochondrion"/>
    <property type="evidence" value="ECO:0007669"/>
    <property type="project" value="UniProtKB-SubCell"/>
</dbReference>
<dbReference type="GO" id="GO:0003746">
    <property type="term" value="F:translation elongation factor activity"/>
    <property type="evidence" value="ECO:0007669"/>
    <property type="project" value="UniProtKB-UniRule"/>
</dbReference>
<dbReference type="GO" id="GO:0070125">
    <property type="term" value="P:mitochondrial translational elongation"/>
    <property type="evidence" value="ECO:0007669"/>
    <property type="project" value="TreeGrafter"/>
</dbReference>
<dbReference type="CDD" id="cd14275">
    <property type="entry name" value="UBA_EF-Ts"/>
    <property type="match status" value="1"/>
</dbReference>
<dbReference type="FunFam" id="1.10.8.10:FF:000001">
    <property type="entry name" value="Elongation factor Ts"/>
    <property type="match status" value="1"/>
</dbReference>
<dbReference type="FunFam" id="3.30.479.20:FF:000033">
    <property type="entry name" value="Elongation factor Ts, mitochondrial"/>
    <property type="match status" value="1"/>
</dbReference>
<dbReference type="Gene3D" id="1.10.8.10">
    <property type="entry name" value="DNA helicase RuvA subunit, C-terminal domain"/>
    <property type="match status" value="1"/>
</dbReference>
<dbReference type="Gene3D" id="3.30.479.20">
    <property type="entry name" value="Elongation factor Ts, dimerisation domain"/>
    <property type="match status" value="1"/>
</dbReference>
<dbReference type="HAMAP" id="MF_00050">
    <property type="entry name" value="EF_Ts"/>
    <property type="match status" value="1"/>
</dbReference>
<dbReference type="InterPro" id="IPR036402">
    <property type="entry name" value="EF-Ts_dimer_sf"/>
</dbReference>
<dbReference type="InterPro" id="IPR001816">
    <property type="entry name" value="Transl_elong_EFTs/EF1B"/>
</dbReference>
<dbReference type="InterPro" id="IPR014039">
    <property type="entry name" value="Transl_elong_EFTs/EF1B_dimer"/>
</dbReference>
<dbReference type="InterPro" id="IPR009060">
    <property type="entry name" value="UBA-like_sf"/>
</dbReference>
<dbReference type="PANTHER" id="PTHR11741">
    <property type="entry name" value="ELONGATION FACTOR TS"/>
    <property type="match status" value="1"/>
</dbReference>
<dbReference type="PANTHER" id="PTHR11741:SF0">
    <property type="entry name" value="ELONGATION FACTOR TS, MITOCHONDRIAL"/>
    <property type="match status" value="1"/>
</dbReference>
<dbReference type="Pfam" id="PF00889">
    <property type="entry name" value="EF_TS"/>
    <property type="match status" value="1"/>
</dbReference>
<dbReference type="SUPFAM" id="SSF54713">
    <property type="entry name" value="Elongation factor Ts (EF-Ts), dimerisation domain"/>
    <property type="match status" value="1"/>
</dbReference>
<dbReference type="SUPFAM" id="SSF46934">
    <property type="entry name" value="UBA-like"/>
    <property type="match status" value="1"/>
</dbReference>
<name>EFTS_LEIIN</name>
<organism>
    <name type="scientific">Leishmania infantum</name>
    <dbReference type="NCBI Taxonomy" id="5671"/>
    <lineage>
        <taxon>Eukaryota</taxon>
        <taxon>Discoba</taxon>
        <taxon>Euglenozoa</taxon>
        <taxon>Kinetoplastea</taxon>
        <taxon>Metakinetoplastina</taxon>
        <taxon>Trypanosomatida</taxon>
        <taxon>Trypanosomatidae</taxon>
        <taxon>Leishmaniinae</taxon>
        <taxon>Leishmania</taxon>
    </lineage>
</organism>
<keyword id="KW-0251">Elongation factor</keyword>
<keyword id="KW-0496">Mitochondrion</keyword>
<keyword id="KW-0648">Protein biosynthesis</keyword>
<keyword id="KW-1185">Reference proteome</keyword>
<reference key="1">
    <citation type="journal article" date="2007" name="Nat. Genet.">
        <title>Comparative genomic analysis of three Leishmania species that cause diverse human disease.</title>
        <authorList>
            <person name="Peacock C.S."/>
            <person name="Seeger K."/>
            <person name="Harris D."/>
            <person name="Murphy L."/>
            <person name="Ruiz J.C."/>
            <person name="Quail M.A."/>
            <person name="Peters N."/>
            <person name="Adlem E."/>
            <person name="Tivey A."/>
            <person name="Aslett M."/>
            <person name="Kerhornou A."/>
            <person name="Ivens A."/>
            <person name="Fraser A."/>
            <person name="Rajandream M.-A."/>
            <person name="Carver T."/>
            <person name="Norbertczak H."/>
            <person name="Chillingworth T."/>
            <person name="Hance Z."/>
            <person name="Jagels K."/>
            <person name="Moule S."/>
            <person name="Ormond D."/>
            <person name="Rutter S."/>
            <person name="Sqaures R."/>
            <person name="Whitehead S."/>
            <person name="Rabbinowitsch E."/>
            <person name="Arrowsmith C."/>
            <person name="White B."/>
            <person name="Thurston S."/>
            <person name="Bringaud F."/>
            <person name="Baldauf S.L."/>
            <person name="Faulconbridge A."/>
            <person name="Jeffares D."/>
            <person name="Depledge D.P."/>
            <person name="Oyola S.O."/>
            <person name="Hilley J.D."/>
            <person name="Brito L.O."/>
            <person name="Tosi L.R.O."/>
            <person name="Barrell B."/>
            <person name="Cruz A.K."/>
            <person name="Mottram J.C."/>
            <person name="Smith D.F."/>
            <person name="Berriman M."/>
        </authorList>
    </citation>
    <scope>NUCLEOTIDE SEQUENCE [LARGE SCALE GENOMIC DNA]</scope>
    <source>
        <strain>JPCM5</strain>
    </source>
</reference>
<evidence type="ECO:0000255" key="1">
    <source>
        <dbReference type="HAMAP-Rule" id="MF_03135"/>
    </source>
</evidence>
<protein>
    <recommendedName>
        <fullName evidence="1">Elongation factor Ts, mitochondrial</fullName>
        <shortName evidence="1">EF-Ts</shortName>
        <shortName evidence="1">EF-TsMt</shortName>
    </recommendedName>
</protein>
<sequence>MPHRSLVCFAAPADKKAFMELVKTLRYRTEAPISDCSAALKETDGDMDAAMQVLRKRGAARAMKKGDRVTEHGFVVSCVGSTPASGAAIVTICSETDFAARNEHFQKVCVQARDQLCKLMDATNGAVLANPEEAVKHLSDVMAEELRVAIAVLGENMRVRSIAPLVPAPHMSERLLIGSYTHGSLNVDNVGRIVGLVALSQVRENEVVPKDVLTSVGRHFVATSGAEGNYAHQNFFGSETETVGKWLKQRGLKFSSSLVQEFGKEPVVHTAPEPHR</sequence>
<proteinExistence type="inferred from homology"/>
<accession>A4I4C5</accession>